<organism>
    <name type="scientific">Burkholderia multivorans (strain ATCC 17616 / 249)</name>
    <dbReference type="NCBI Taxonomy" id="395019"/>
    <lineage>
        <taxon>Bacteria</taxon>
        <taxon>Pseudomonadati</taxon>
        <taxon>Pseudomonadota</taxon>
        <taxon>Betaproteobacteria</taxon>
        <taxon>Burkholderiales</taxon>
        <taxon>Burkholderiaceae</taxon>
        <taxon>Burkholderia</taxon>
        <taxon>Burkholderia cepacia complex</taxon>
    </lineage>
</organism>
<feature type="chain" id="PRO_1000142241" description="Large ribosomal subunit protein uL22">
    <location>
        <begin position="1"/>
        <end position="109"/>
    </location>
</feature>
<gene>
    <name evidence="1" type="primary">rplV</name>
    <name type="ordered locus">Bmul_0254</name>
    <name type="ordered locus">BMULJ_03000</name>
</gene>
<sequence>MEVKAIHRGARISAQKTRLVADQIRGLPVDKALNVLTFSPKKAAGIVKKVVLSAIANAEHNEGADIDELKIKSIYVDKAASLKRFTARAKGRGNRIEKQSCHITVTVGN</sequence>
<reference key="1">
    <citation type="submission" date="2007-10" db="EMBL/GenBank/DDBJ databases">
        <title>Complete sequence of chromosome 1 of Burkholderia multivorans ATCC 17616.</title>
        <authorList>
            <person name="Copeland A."/>
            <person name="Lucas S."/>
            <person name="Lapidus A."/>
            <person name="Barry K."/>
            <person name="Glavina del Rio T."/>
            <person name="Dalin E."/>
            <person name="Tice H."/>
            <person name="Pitluck S."/>
            <person name="Chain P."/>
            <person name="Malfatti S."/>
            <person name="Shin M."/>
            <person name="Vergez L."/>
            <person name="Schmutz J."/>
            <person name="Larimer F."/>
            <person name="Land M."/>
            <person name="Hauser L."/>
            <person name="Kyrpides N."/>
            <person name="Kim E."/>
            <person name="Tiedje J."/>
            <person name="Richardson P."/>
        </authorList>
    </citation>
    <scope>NUCLEOTIDE SEQUENCE [LARGE SCALE GENOMIC DNA]</scope>
    <source>
        <strain>ATCC 17616 / 249</strain>
    </source>
</reference>
<reference key="2">
    <citation type="submission" date="2007-04" db="EMBL/GenBank/DDBJ databases">
        <title>Complete genome sequence of Burkholderia multivorans ATCC 17616.</title>
        <authorList>
            <person name="Ohtsubo Y."/>
            <person name="Yamashita A."/>
            <person name="Kurokawa K."/>
            <person name="Takami H."/>
            <person name="Yuhara S."/>
            <person name="Nishiyama E."/>
            <person name="Endo R."/>
            <person name="Miyazaki R."/>
            <person name="Ono A."/>
            <person name="Yano K."/>
            <person name="Ito M."/>
            <person name="Sota M."/>
            <person name="Yuji N."/>
            <person name="Hattori M."/>
            <person name="Tsuda M."/>
        </authorList>
    </citation>
    <scope>NUCLEOTIDE SEQUENCE [LARGE SCALE GENOMIC DNA]</scope>
    <source>
        <strain>ATCC 17616 / 249</strain>
    </source>
</reference>
<evidence type="ECO:0000255" key="1">
    <source>
        <dbReference type="HAMAP-Rule" id="MF_01331"/>
    </source>
</evidence>
<evidence type="ECO:0000305" key="2"/>
<keyword id="KW-1185">Reference proteome</keyword>
<keyword id="KW-0687">Ribonucleoprotein</keyword>
<keyword id="KW-0689">Ribosomal protein</keyword>
<keyword id="KW-0694">RNA-binding</keyword>
<keyword id="KW-0699">rRNA-binding</keyword>
<protein>
    <recommendedName>
        <fullName evidence="1">Large ribosomal subunit protein uL22</fullName>
    </recommendedName>
    <alternativeName>
        <fullName evidence="2">50S ribosomal protein L22</fullName>
    </alternativeName>
</protein>
<accession>A9ADJ8</accession>
<dbReference type="EMBL" id="CP000868">
    <property type="protein sequence ID" value="ABX13949.1"/>
    <property type="molecule type" value="Genomic_DNA"/>
</dbReference>
<dbReference type="EMBL" id="AP009385">
    <property type="protein sequence ID" value="BAG44885.1"/>
    <property type="molecule type" value="Genomic_DNA"/>
</dbReference>
<dbReference type="RefSeq" id="WP_004199272.1">
    <property type="nucleotide sequence ID" value="NC_010804.1"/>
</dbReference>
<dbReference type="SMR" id="A9ADJ8"/>
<dbReference type="STRING" id="395019.BMULJ_03000"/>
<dbReference type="GeneID" id="98107155"/>
<dbReference type="KEGG" id="bmj:BMULJ_03000"/>
<dbReference type="KEGG" id="bmu:Bmul_0254"/>
<dbReference type="eggNOG" id="COG0091">
    <property type="taxonomic scope" value="Bacteria"/>
</dbReference>
<dbReference type="HOGENOM" id="CLU_083987_3_3_4"/>
<dbReference type="Proteomes" id="UP000008815">
    <property type="component" value="Chromosome 1"/>
</dbReference>
<dbReference type="GO" id="GO:0022625">
    <property type="term" value="C:cytosolic large ribosomal subunit"/>
    <property type="evidence" value="ECO:0007669"/>
    <property type="project" value="TreeGrafter"/>
</dbReference>
<dbReference type="GO" id="GO:0019843">
    <property type="term" value="F:rRNA binding"/>
    <property type="evidence" value="ECO:0007669"/>
    <property type="project" value="UniProtKB-UniRule"/>
</dbReference>
<dbReference type="GO" id="GO:0003735">
    <property type="term" value="F:structural constituent of ribosome"/>
    <property type="evidence" value="ECO:0007669"/>
    <property type="project" value="InterPro"/>
</dbReference>
<dbReference type="GO" id="GO:0006412">
    <property type="term" value="P:translation"/>
    <property type="evidence" value="ECO:0007669"/>
    <property type="project" value="UniProtKB-UniRule"/>
</dbReference>
<dbReference type="CDD" id="cd00336">
    <property type="entry name" value="Ribosomal_L22"/>
    <property type="match status" value="1"/>
</dbReference>
<dbReference type="FunFam" id="3.90.470.10:FF:000001">
    <property type="entry name" value="50S ribosomal protein L22"/>
    <property type="match status" value="1"/>
</dbReference>
<dbReference type="Gene3D" id="3.90.470.10">
    <property type="entry name" value="Ribosomal protein L22/L17"/>
    <property type="match status" value="1"/>
</dbReference>
<dbReference type="HAMAP" id="MF_01331_B">
    <property type="entry name" value="Ribosomal_uL22_B"/>
    <property type="match status" value="1"/>
</dbReference>
<dbReference type="InterPro" id="IPR001063">
    <property type="entry name" value="Ribosomal_uL22"/>
</dbReference>
<dbReference type="InterPro" id="IPR005727">
    <property type="entry name" value="Ribosomal_uL22_bac/chlpt-type"/>
</dbReference>
<dbReference type="InterPro" id="IPR047867">
    <property type="entry name" value="Ribosomal_uL22_bac/org-type"/>
</dbReference>
<dbReference type="InterPro" id="IPR018260">
    <property type="entry name" value="Ribosomal_uL22_CS"/>
</dbReference>
<dbReference type="InterPro" id="IPR036394">
    <property type="entry name" value="Ribosomal_uL22_sf"/>
</dbReference>
<dbReference type="NCBIfam" id="TIGR01044">
    <property type="entry name" value="rplV_bact"/>
    <property type="match status" value="1"/>
</dbReference>
<dbReference type="PANTHER" id="PTHR13501">
    <property type="entry name" value="CHLOROPLAST 50S RIBOSOMAL PROTEIN L22-RELATED"/>
    <property type="match status" value="1"/>
</dbReference>
<dbReference type="PANTHER" id="PTHR13501:SF8">
    <property type="entry name" value="LARGE RIBOSOMAL SUBUNIT PROTEIN UL22M"/>
    <property type="match status" value="1"/>
</dbReference>
<dbReference type="Pfam" id="PF00237">
    <property type="entry name" value="Ribosomal_L22"/>
    <property type="match status" value="1"/>
</dbReference>
<dbReference type="SUPFAM" id="SSF54843">
    <property type="entry name" value="Ribosomal protein L22"/>
    <property type="match status" value="1"/>
</dbReference>
<dbReference type="PROSITE" id="PS00464">
    <property type="entry name" value="RIBOSOMAL_L22"/>
    <property type="match status" value="1"/>
</dbReference>
<name>RL22_BURM1</name>
<comment type="function">
    <text evidence="1">This protein binds specifically to 23S rRNA; its binding is stimulated by other ribosomal proteins, e.g. L4, L17, and L20. It is important during the early stages of 50S assembly. It makes multiple contacts with different domains of the 23S rRNA in the assembled 50S subunit and ribosome (By similarity).</text>
</comment>
<comment type="function">
    <text evidence="1">The globular domain of the protein is located near the polypeptide exit tunnel on the outside of the subunit, while an extended beta-hairpin is found that lines the wall of the exit tunnel in the center of the 70S ribosome.</text>
</comment>
<comment type="subunit">
    <text evidence="1">Part of the 50S ribosomal subunit.</text>
</comment>
<comment type="similarity">
    <text evidence="1">Belongs to the universal ribosomal protein uL22 family.</text>
</comment>
<proteinExistence type="inferred from homology"/>